<organism>
    <name type="scientific">Bos taurus</name>
    <name type="common">Bovine</name>
    <dbReference type="NCBI Taxonomy" id="9913"/>
    <lineage>
        <taxon>Eukaryota</taxon>
        <taxon>Metazoa</taxon>
        <taxon>Chordata</taxon>
        <taxon>Craniata</taxon>
        <taxon>Vertebrata</taxon>
        <taxon>Euteleostomi</taxon>
        <taxon>Mammalia</taxon>
        <taxon>Eutheria</taxon>
        <taxon>Laurasiatheria</taxon>
        <taxon>Artiodactyla</taxon>
        <taxon>Ruminantia</taxon>
        <taxon>Pecora</taxon>
        <taxon>Bovidae</taxon>
        <taxon>Bovinae</taxon>
        <taxon>Bos</taxon>
    </lineage>
</organism>
<reference key="1">
    <citation type="journal article" date="1989" name="FEBS Lett.">
        <title>Sequence and expression of a novel GABAA receptor alpha subunit.</title>
        <authorList>
            <person name="Ymer S."/>
            <person name="Draguhn A."/>
            <person name="Koehler M."/>
            <person name="Schofield P.R."/>
            <person name="Seeburg P.H."/>
        </authorList>
    </citation>
    <scope>NUCLEOTIDE SEQUENCE [MRNA]</scope>
    <scope>FUNCTION</scope>
    <scope>TRANSPORTER ACTIVITY</scope>
    <scope>TISSUE SPECIFICITY</scope>
    <source>
        <tissue>Brain</tissue>
    </source>
</reference>
<reference key="2">
    <citation type="submission" date="2006-09" db="EMBL/GenBank/DDBJ databases">
        <authorList>
            <consortium name="NIH - Mammalian Gene Collection (MGC) project"/>
        </authorList>
    </citation>
    <scope>NUCLEOTIDE SEQUENCE [LARGE SCALE MRNA]</scope>
    <source>
        <strain>Hereford</strain>
        <tissue>Thalamus</tissue>
    </source>
</reference>
<accession>P20237</accession>
<accession>Q08E47</accession>
<comment type="function">
    <text evidence="1 3 4 7">Alpha subunit of the heteropentameric ligand-gated chloride channel gated by gamma-aminobutyric acid (GABA), a major inhibitory neurotransmitter in the brain (PubMed:2556293). GABA-gated chloride channels, also named GABA(A) receptors (GABAAR), consist of five subunits arranged around a central pore and contain GABA active binding site(s) located at the alpha and beta subunit interface(s) (By similarity). When activated by GABA, GABAARs selectively allow the flow of chloride anions across the cell membrane down their electrochemical gradient (PubMed:2556293). GABAARs containing alpha-4 are predominantly extrasynaptic, contributing to tonic inhibition in dentate granule cells and thalamic relay neurons (By similarity). Extrasynaptic alpha-4-containing GABAARs control levels of excitability and network activity (By similarity). GABAARs containing alpha-4 are often found with the delta or gamma-2 subunits, in combination with beta subunits (By similarity). GABAAR containing alpha-4-beta-3-delta subunits can simultaneously bind GABA and histamine where histamine binds at the interface of two neighboring beta subunits, which may be involved in the regulation of sleep and wakefulness (By similarity).</text>
</comment>
<comment type="catalytic activity">
    <reaction evidence="7">
        <text>chloride(in) = chloride(out)</text>
        <dbReference type="Rhea" id="RHEA:29823"/>
        <dbReference type="ChEBI" id="CHEBI:17996"/>
    </reaction>
</comment>
<comment type="activity regulation">
    <text evidence="3">Potentiated by histamine.</text>
</comment>
<comment type="subunit">
    <text evidence="3">Heteropentamer, formed by a combination of alpha (GABRA1-6), beta (GABRB1-3), gamma (GABRG1-3), delta (GABRD), epsilon (GABRE), rho (GABRR1-3), pi (GABRP) and theta (GABRQ) chains, each subunit exhibiting distinct physiological and pharmacological properties.</text>
</comment>
<comment type="subcellular location">
    <subcellularLocation>
        <location evidence="4">Cell membrane</location>
        <topology evidence="3">Multi-pass membrane protein</topology>
    </subcellularLocation>
    <subcellularLocation>
        <location>Postsynaptic cell membrane</location>
        <topology evidence="3">Multi-pass membrane protein</topology>
    </subcellularLocation>
</comment>
<comment type="tissue specificity">
    <text evidence="7">Expressed in the brain.</text>
</comment>
<comment type="domain">
    <text evidence="3">The GABA-binding pockets are located at the interface between neighboring alpha and beta subunits.</text>
</comment>
<comment type="domain">
    <text evidence="1">GABAARs subunits share a common topological structure: a peptide sequence made up of a long extracellular N-terminal, four transmembrane domains, intracellular or cytoplasmic domain located between the third and the fourth transmembrane domains.</text>
</comment>
<comment type="similarity">
    <text evidence="8">Belongs to the ligand-gated ion channel (TC 1.A.9) family. Gamma-aminobutyric acid receptor (TC 1.A.9.5) subfamily. GABRA4 sub-subfamily.</text>
</comment>
<protein>
    <recommendedName>
        <fullName evidence="3">Gamma-aminobutyric acid receptor subunit alpha-4</fullName>
    </recommendedName>
    <alternativeName>
        <fullName evidence="3">GABA(A) receptor subunit alpha-4</fullName>
        <shortName evidence="4">GABAAR subunit alpha-4</shortName>
    </alternativeName>
</protein>
<name>GBRA4_BOVIN</name>
<gene>
    <name type="primary">GABRA4</name>
</gene>
<keyword id="KW-1003">Cell membrane</keyword>
<keyword id="KW-0868">Chloride</keyword>
<keyword id="KW-0869">Chloride channel</keyword>
<keyword id="KW-1015">Disulfide bond</keyword>
<keyword id="KW-0325">Glycoprotein</keyword>
<keyword id="KW-0407">Ion channel</keyword>
<keyword id="KW-0406">Ion transport</keyword>
<keyword id="KW-1071">Ligand-gated ion channel</keyword>
<keyword id="KW-0472">Membrane</keyword>
<keyword id="KW-0628">Postsynaptic cell membrane</keyword>
<keyword id="KW-0675">Receptor</keyword>
<keyword id="KW-1185">Reference proteome</keyword>
<keyword id="KW-0732">Signal</keyword>
<keyword id="KW-0770">Synapse</keyword>
<keyword id="KW-0812">Transmembrane</keyword>
<keyword id="KW-1133">Transmembrane helix</keyword>
<keyword id="KW-0813">Transport</keyword>
<evidence type="ECO:0000250" key="1">
    <source>
        <dbReference type="UniProtKB" id="P14867"/>
    </source>
</evidence>
<evidence type="ECO:0000250" key="2">
    <source>
        <dbReference type="UniProtKB" id="P28472"/>
    </source>
</evidence>
<evidence type="ECO:0000250" key="3">
    <source>
        <dbReference type="UniProtKB" id="P48169"/>
    </source>
</evidence>
<evidence type="ECO:0000250" key="4">
    <source>
        <dbReference type="UniProtKB" id="Q9D6F4"/>
    </source>
</evidence>
<evidence type="ECO:0000255" key="5"/>
<evidence type="ECO:0000256" key="6">
    <source>
        <dbReference type="SAM" id="MobiDB-lite"/>
    </source>
</evidence>
<evidence type="ECO:0000269" key="7">
    <source>
    </source>
</evidence>
<evidence type="ECO:0000305" key="8"/>
<proteinExistence type="evidence at transcript level"/>
<sequence length="555" mass="61547">MVSAKKVPAIAMSFGVSFALLHFLCLAACLNESPGQNQKEEKLCPENFTRILDSLLDGYDNRLRPGFGGPVTEVKTDIYVTSFGPVSDVEMEYTMDVFFRQTWIDKRLKYDGPIEILRLNNMMVTKVWTPDTFFRNGKKSVSHNMTAPNKLFRIMRNGTILYTMRLTISAECPMRLVDFPMDGHACPLKFGSYAYPKSEMIYTWTKGPEKSVEVPKESSSLVQYDLIGQTVSSETIKSITGEYIVMTVYFHLRRKMGYFMIQTYIPCIMTVILSQVSFWINKESVPARTVFGITTVLTMTTLSISARHSLPKVSYATAMDWFIAVCFAFVFSALIEFAAVNYFTNVQMEKAKRKTSKAPQEISAAPVLREKHPETPLQNTNANLSMRKRANALVHSESDVGSRTDVGNHSSKSSTVVQGSSEATPQSYLASSPNPFSRANAAETISAARAIPSALPSTPSRTGYVPRQVPVGSASTQHVFGSRLQRIKTTVNSIGTSGKLSATTTPSAPPPSGSGTSKIDKYARILFPVTFGAFNMVYWVVYLSKDTMEKSESLM</sequence>
<feature type="signal peptide" evidence="5">
    <location>
        <begin position="1"/>
        <end position="35"/>
    </location>
</feature>
<feature type="chain" id="PRO_0000000440" description="Gamma-aminobutyric acid receptor subunit alpha-4">
    <location>
        <begin position="36"/>
        <end position="555"/>
    </location>
</feature>
<feature type="topological domain" description="Extracellular" evidence="8">
    <location>
        <begin position="36"/>
        <end position="259"/>
    </location>
</feature>
<feature type="transmembrane region" description="Helical" evidence="3">
    <location>
        <begin position="260"/>
        <end position="280"/>
    </location>
</feature>
<feature type="topological domain" description="Cytoplasmic" evidence="8">
    <location>
        <begin position="281"/>
        <end position="284"/>
    </location>
</feature>
<feature type="transmembrane region" description="Helical" evidence="3">
    <location>
        <begin position="285"/>
        <end position="305"/>
    </location>
</feature>
<feature type="topological domain" description="Extracellular" evidence="8">
    <location>
        <begin position="306"/>
        <end position="318"/>
    </location>
</feature>
<feature type="transmembrane region" description="Helical" evidence="3">
    <location>
        <begin position="319"/>
        <end position="341"/>
    </location>
</feature>
<feature type="topological domain" description="Cytoplasmic" evidence="8">
    <location>
        <begin position="342"/>
        <end position="518"/>
    </location>
</feature>
<feature type="transmembrane region" description="Helical" evidence="3">
    <location>
        <begin position="519"/>
        <end position="545"/>
    </location>
</feature>
<feature type="topological domain" description="Extracellular" evidence="8">
    <location>
        <begin position="546"/>
        <end position="555"/>
    </location>
</feature>
<feature type="region of interest" description="Disordered" evidence="6">
    <location>
        <begin position="354"/>
        <end position="435"/>
    </location>
</feature>
<feature type="region of interest" description="Disordered" evidence="6">
    <location>
        <begin position="495"/>
        <end position="516"/>
    </location>
</feature>
<feature type="compositionally biased region" description="Low complexity" evidence="6">
    <location>
        <begin position="410"/>
        <end position="421"/>
    </location>
</feature>
<feature type="compositionally biased region" description="Polar residues" evidence="6">
    <location>
        <begin position="422"/>
        <end position="435"/>
    </location>
</feature>
<feature type="binding site" evidence="3">
    <location>
        <position position="100"/>
    </location>
    <ligand>
        <name>4-aminobutanoate</name>
        <dbReference type="ChEBI" id="CHEBI:59888"/>
        <note>ligand shared with the neighboring beta subunit</note>
    </ligand>
</feature>
<feature type="binding site" evidence="3">
    <location>
        <position position="163"/>
    </location>
    <ligand>
        <name>4-aminobutanoate</name>
        <dbReference type="ChEBI" id="CHEBI:59888"/>
        <note>ligand shared with the neighboring beta subunit</note>
    </ligand>
</feature>
<feature type="glycosylation site" description="N-linked (GlcNAc...) asparagine" evidence="5">
    <location>
        <position position="47"/>
    </location>
</feature>
<feature type="glycosylation site" description="N-linked (GlcNAc...) asparagine" evidence="5">
    <location>
        <position position="144"/>
    </location>
</feature>
<feature type="glycosylation site" description="N-linked (GlcNAc...) asparagine" evidence="5">
    <location>
        <position position="157"/>
    </location>
</feature>
<feature type="disulfide bond" evidence="2">
    <location>
        <begin position="172"/>
        <end position="186"/>
    </location>
</feature>
<feature type="sequence conflict" description="In Ref. 1; CAA43696." evidence="8" ref="1">
    <original>H</original>
    <variation>PI</variation>
    <location>
        <position position="308"/>
    </location>
</feature>
<dbReference type="EMBL" id="X61456">
    <property type="protein sequence ID" value="CAA43696.1"/>
    <property type="molecule type" value="mRNA"/>
</dbReference>
<dbReference type="EMBL" id="BC123424">
    <property type="protein sequence ID" value="AAI23425.1"/>
    <property type="molecule type" value="mRNA"/>
</dbReference>
<dbReference type="PIR" id="S06838">
    <property type="entry name" value="S06838"/>
</dbReference>
<dbReference type="RefSeq" id="NP_776968.1">
    <property type="nucleotide sequence ID" value="NM_174543.2"/>
</dbReference>
<dbReference type="SMR" id="P20237"/>
<dbReference type="FunCoup" id="P20237">
    <property type="interactions" value="539"/>
</dbReference>
<dbReference type="STRING" id="9913.ENSBTAP00000063141"/>
<dbReference type="ChEMBL" id="CHEMBL2094107"/>
<dbReference type="DrugCentral" id="P20237"/>
<dbReference type="GlyCosmos" id="P20237">
    <property type="glycosylation" value="3 sites, No reported glycans"/>
</dbReference>
<dbReference type="GlyGen" id="P20237">
    <property type="glycosylation" value="3 sites"/>
</dbReference>
<dbReference type="PaxDb" id="9913-ENSBTAP00000022141"/>
<dbReference type="Ensembl" id="ENSBTAT00000068378.1">
    <property type="protein sequence ID" value="ENSBTAP00000063141.1"/>
    <property type="gene ID" value="ENSBTAG00000016645.7"/>
</dbReference>
<dbReference type="GeneID" id="282238"/>
<dbReference type="KEGG" id="bta:282238"/>
<dbReference type="CTD" id="2557"/>
<dbReference type="VEuPathDB" id="HostDB:ENSBTAG00000016645"/>
<dbReference type="VGNC" id="VGNC:29193">
    <property type="gene designation" value="GABRA4"/>
</dbReference>
<dbReference type="eggNOG" id="KOG3642">
    <property type="taxonomic scope" value="Eukaryota"/>
</dbReference>
<dbReference type="GeneTree" id="ENSGT00940000159024"/>
<dbReference type="HOGENOM" id="CLU_010920_2_2_1"/>
<dbReference type="InParanoid" id="P20237"/>
<dbReference type="OMA" id="FFCLTTC"/>
<dbReference type="OrthoDB" id="203862at2759"/>
<dbReference type="TreeFam" id="TF315453"/>
<dbReference type="Reactome" id="R-BTA-977443">
    <property type="pathway name" value="GABA receptor activation"/>
</dbReference>
<dbReference type="PRO" id="PR:P20237"/>
<dbReference type="Proteomes" id="UP000009136">
    <property type="component" value="Chromosome 6"/>
</dbReference>
<dbReference type="Bgee" id="ENSBTAG00000016645">
    <property type="expression patterns" value="Expressed in occipital lobe and 31 other cell types or tissues"/>
</dbReference>
<dbReference type="GO" id="GO:0034707">
    <property type="term" value="C:chloride channel complex"/>
    <property type="evidence" value="ECO:0007669"/>
    <property type="project" value="UniProtKB-KW"/>
</dbReference>
<dbReference type="GO" id="GO:0032590">
    <property type="term" value="C:dendrite membrane"/>
    <property type="evidence" value="ECO:0000318"/>
    <property type="project" value="GO_Central"/>
</dbReference>
<dbReference type="GO" id="GO:1902711">
    <property type="term" value="C:GABA-A receptor complex"/>
    <property type="evidence" value="ECO:0000318"/>
    <property type="project" value="GO_Central"/>
</dbReference>
<dbReference type="GO" id="GO:0098794">
    <property type="term" value="C:postsynapse"/>
    <property type="evidence" value="ECO:0000318"/>
    <property type="project" value="GO_Central"/>
</dbReference>
<dbReference type="GO" id="GO:0045211">
    <property type="term" value="C:postsynaptic membrane"/>
    <property type="evidence" value="ECO:0007669"/>
    <property type="project" value="UniProtKB-SubCell"/>
</dbReference>
<dbReference type="GO" id="GO:0004890">
    <property type="term" value="F:GABA-A receptor activity"/>
    <property type="evidence" value="ECO:0007669"/>
    <property type="project" value="InterPro"/>
</dbReference>
<dbReference type="GO" id="GO:0022851">
    <property type="term" value="F:GABA-gated chloride ion channel activity"/>
    <property type="evidence" value="ECO:0000318"/>
    <property type="project" value="GO_Central"/>
</dbReference>
<dbReference type="GO" id="GO:0007417">
    <property type="term" value="P:central nervous system development"/>
    <property type="evidence" value="ECO:0007669"/>
    <property type="project" value="Ensembl"/>
</dbReference>
<dbReference type="GO" id="GO:1902476">
    <property type="term" value="P:chloride transmembrane transport"/>
    <property type="evidence" value="ECO:0000318"/>
    <property type="project" value="GO_Central"/>
</dbReference>
<dbReference type="GO" id="GO:0007214">
    <property type="term" value="P:gamma-aminobutyric acid signaling pathway"/>
    <property type="evidence" value="ECO:0000318"/>
    <property type="project" value="GO_Central"/>
</dbReference>
<dbReference type="GO" id="GO:1904862">
    <property type="term" value="P:inhibitory synapse assembly"/>
    <property type="evidence" value="ECO:0000318"/>
    <property type="project" value="GO_Central"/>
</dbReference>
<dbReference type="GO" id="GO:0051932">
    <property type="term" value="P:synaptic transmission, GABAergic"/>
    <property type="evidence" value="ECO:0000318"/>
    <property type="project" value="GO_Central"/>
</dbReference>
<dbReference type="CDD" id="cd19037">
    <property type="entry name" value="LGIC_ECD_GABAAR_A4"/>
    <property type="match status" value="1"/>
</dbReference>
<dbReference type="CDD" id="cd19052">
    <property type="entry name" value="LGIC_TM_GABAAR_alpha"/>
    <property type="match status" value="1"/>
</dbReference>
<dbReference type="FunFam" id="2.70.170.10:FF:000001">
    <property type="entry name" value="Gamma-aminobutyric acid A receptor subunit alpha-2"/>
    <property type="match status" value="1"/>
</dbReference>
<dbReference type="FunFam" id="1.20.58.390:FF:000002">
    <property type="entry name" value="Putative gamma-aminobutyric acid receptor subunit alpha-5"/>
    <property type="match status" value="1"/>
</dbReference>
<dbReference type="Gene3D" id="2.70.170.10">
    <property type="entry name" value="Neurotransmitter-gated ion-channel ligand-binding domain"/>
    <property type="match status" value="1"/>
</dbReference>
<dbReference type="Gene3D" id="1.20.58.390">
    <property type="entry name" value="Neurotransmitter-gated ion-channel transmembrane domain"/>
    <property type="match status" value="1"/>
</dbReference>
<dbReference type="InterPro" id="IPR006028">
    <property type="entry name" value="GABAA/Glycine_rcpt"/>
</dbReference>
<dbReference type="InterPro" id="IPR001390">
    <property type="entry name" value="GABAAa_rcpt"/>
</dbReference>
<dbReference type="InterPro" id="IPR005434">
    <property type="entry name" value="GABBAa4_rcpt"/>
</dbReference>
<dbReference type="InterPro" id="IPR047024">
    <property type="entry name" value="Gabra-1-6_TM"/>
</dbReference>
<dbReference type="InterPro" id="IPR006202">
    <property type="entry name" value="Neur_chan_lig-bd"/>
</dbReference>
<dbReference type="InterPro" id="IPR036734">
    <property type="entry name" value="Neur_chan_lig-bd_sf"/>
</dbReference>
<dbReference type="InterPro" id="IPR006201">
    <property type="entry name" value="Neur_channel"/>
</dbReference>
<dbReference type="InterPro" id="IPR036719">
    <property type="entry name" value="Neuro-gated_channel_TM_sf"/>
</dbReference>
<dbReference type="InterPro" id="IPR038050">
    <property type="entry name" value="Neuro_actylchol_rec"/>
</dbReference>
<dbReference type="InterPro" id="IPR006029">
    <property type="entry name" value="Neurotrans-gated_channel_TM"/>
</dbReference>
<dbReference type="InterPro" id="IPR018000">
    <property type="entry name" value="Neurotransmitter_ion_chnl_CS"/>
</dbReference>
<dbReference type="NCBIfam" id="TIGR00860">
    <property type="entry name" value="LIC"/>
    <property type="match status" value="1"/>
</dbReference>
<dbReference type="PANTHER" id="PTHR18945">
    <property type="entry name" value="NEUROTRANSMITTER GATED ION CHANNEL"/>
    <property type="match status" value="1"/>
</dbReference>
<dbReference type="Pfam" id="PF02931">
    <property type="entry name" value="Neur_chan_LBD"/>
    <property type="match status" value="1"/>
</dbReference>
<dbReference type="Pfam" id="PF02932">
    <property type="entry name" value="Neur_chan_memb"/>
    <property type="match status" value="1"/>
</dbReference>
<dbReference type="PRINTS" id="PR01079">
    <property type="entry name" value="GABAARALPHA"/>
</dbReference>
<dbReference type="PRINTS" id="PR01617">
    <property type="entry name" value="GABAARALPHA4"/>
</dbReference>
<dbReference type="PRINTS" id="PR00253">
    <property type="entry name" value="GABAARECEPTR"/>
</dbReference>
<dbReference type="PRINTS" id="PR00252">
    <property type="entry name" value="NRIONCHANNEL"/>
</dbReference>
<dbReference type="SUPFAM" id="SSF90112">
    <property type="entry name" value="Neurotransmitter-gated ion-channel transmembrane pore"/>
    <property type="match status" value="1"/>
</dbReference>
<dbReference type="SUPFAM" id="SSF63712">
    <property type="entry name" value="Nicotinic receptor ligand binding domain-like"/>
    <property type="match status" value="1"/>
</dbReference>
<dbReference type="PROSITE" id="PS00236">
    <property type="entry name" value="NEUROTR_ION_CHANNEL"/>
    <property type="match status" value="1"/>
</dbReference>